<evidence type="ECO:0000255" key="1">
    <source>
        <dbReference type="HAMAP-Rule" id="MF_00619"/>
    </source>
</evidence>
<organism>
    <name type="scientific">Prochlorococcus marinus (strain SARG / CCMP1375 / SS120)</name>
    <dbReference type="NCBI Taxonomy" id="167539"/>
    <lineage>
        <taxon>Bacteria</taxon>
        <taxon>Bacillati</taxon>
        <taxon>Cyanobacteriota</taxon>
        <taxon>Cyanophyceae</taxon>
        <taxon>Synechococcales</taxon>
        <taxon>Prochlorococcaceae</taxon>
        <taxon>Prochlorococcus</taxon>
    </lineage>
</organism>
<name>RRP3_PROMA</name>
<dbReference type="EMBL" id="AE017126">
    <property type="protein sequence ID" value="AAQ00637.1"/>
    <property type="molecule type" value="Genomic_DNA"/>
</dbReference>
<dbReference type="RefSeq" id="NP_875984.1">
    <property type="nucleotide sequence ID" value="NC_005042.1"/>
</dbReference>
<dbReference type="SMR" id="Q7VA74"/>
<dbReference type="STRING" id="167539.Pro_1593"/>
<dbReference type="EnsemblBacteria" id="AAQ00637">
    <property type="protein sequence ID" value="AAQ00637"/>
    <property type="gene ID" value="Pro_1593"/>
</dbReference>
<dbReference type="KEGG" id="pma:Pro_1593"/>
<dbReference type="PATRIC" id="fig|167539.5.peg.1684"/>
<dbReference type="eggNOG" id="ENOG503137T">
    <property type="taxonomic scope" value="Bacteria"/>
</dbReference>
<dbReference type="HOGENOM" id="CLU_132693_0_0_3"/>
<dbReference type="OrthoDB" id="486850at2"/>
<dbReference type="Proteomes" id="UP000001420">
    <property type="component" value="Chromosome"/>
</dbReference>
<dbReference type="GO" id="GO:1990904">
    <property type="term" value="C:ribonucleoprotein complex"/>
    <property type="evidence" value="ECO:0007669"/>
    <property type="project" value="UniProtKB-KW"/>
</dbReference>
<dbReference type="GO" id="GO:0005840">
    <property type="term" value="C:ribosome"/>
    <property type="evidence" value="ECO:0007669"/>
    <property type="project" value="UniProtKB-KW"/>
</dbReference>
<dbReference type="GO" id="GO:0003735">
    <property type="term" value="F:structural constituent of ribosome"/>
    <property type="evidence" value="ECO:0007669"/>
    <property type="project" value="InterPro"/>
</dbReference>
<dbReference type="GO" id="GO:0006412">
    <property type="term" value="P:translation"/>
    <property type="evidence" value="ECO:0007669"/>
    <property type="project" value="UniProtKB-UniRule"/>
</dbReference>
<dbReference type="Gene3D" id="3.30.390.140">
    <property type="match status" value="1"/>
</dbReference>
<dbReference type="HAMAP" id="MF_00619">
    <property type="entry name" value="Ribosomal_plastid_cS23"/>
    <property type="match status" value="1"/>
</dbReference>
<dbReference type="InterPro" id="IPR038447">
    <property type="entry name" value="PSRP-3/Ycf65_sf"/>
</dbReference>
<dbReference type="InterPro" id="IPR006924">
    <property type="entry name" value="Ribosomal_PSRP3/Ycf65"/>
</dbReference>
<dbReference type="NCBIfam" id="NF002740">
    <property type="entry name" value="PRK02724.1"/>
    <property type="match status" value="1"/>
</dbReference>
<dbReference type="PANTHER" id="PTHR35108">
    <property type="entry name" value="30S RIBOSOMAL PROTEIN 3, CHLOROPLASTIC"/>
    <property type="match status" value="1"/>
</dbReference>
<dbReference type="PANTHER" id="PTHR35108:SF1">
    <property type="entry name" value="OS04G0461100 PROTEIN"/>
    <property type="match status" value="1"/>
</dbReference>
<dbReference type="Pfam" id="PF04839">
    <property type="entry name" value="PSRP-3_Ycf65"/>
    <property type="match status" value="1"/>
</dbReference>
<feature type="chain" id="PRO_0000216749" description="Probable small ribosomal subunit protein cS23">
    <location>
        <begin position="1"/>
        <end position="126"/>
    </location>
</feature>
<sequence length="126" mass="13931">MLGAAEVLASATFDADGVPSGHTPKADEGRFLLKILWLPDNVALAVDQIVGGGTSPLTAYFFWPREDAWETLKTELEDKAWITDNERVEVLNKATEVINYWQEEGKGKTLEEAKLKFPEVTFCGTA</sequence>
<keyword id="KW-1185">Reference proteome</keyword>
<keyword id="KW-0687">Ribonucleoprotein</keyword>
<keyword id="KW-0689">Ribosomal protein</keyword>
<gene>
    <name type="ordered locus">Pro_1593</name>
</gene>
<proteinExistence type="inferred from homology"/>
<reference key="1">
    <citation type="journal article" date="2003" name="Proc. Natl. Acad. Sci. U.S.A.">
        <title>Genome sequence of the cyanobacterium Prochlorococcus marinus SS120, a nearly minimal oxyphototrophic genome.</title>
        <authorList>
            <person name="Dufresne A."/>
            <person name="Salanoubat M."/>
            <person name="Partensky F."/>
            <person name="Artiguenave F."/>
            <person name="Axmann I.M."/>
            <person name="Barbe V."/>
            <person name="Duprat S."/>
            <person name="Galperin M.Y."/>
            <person name="Koonin E.V."/>
            <person name="Le Gall F."/>
            <person name="Makarova K.S."/>
            <person name="Ostrowski M."/>
            <person name="Oztas S."/>
            <person name="Robert C."/>
            <person name="Rogozin I.B."/>
            <person name="Scanlan D.J."/>
            <person name="Tandeau de Marsac N."/>
            <person name="Weissenbach J."/>
            <person name="Wincker P."/>
            <person name="Wolf Y.I."/>
            <person name="Hess W.R."/>
        </authorList>
    </citation>
    <scope>NUCLEOTIDE SEQUENCE [LARGE SCALE GENOMIC DNA]</scope>
    <source>
        <strain>SARG / CCMP1375 / SS120</strain>
    </source>
</reference>
<accession>Q7VA74</accession>
<comment type="function">
    <text evidence="1">Probably a ribosomal protein or a ribosome-associated protein.</text>
</comment>
<comment type="subunit">
    <text evidence="1">Part of the 30S ribosomal subunit.</text>
</comment>
<comment type="similarity">
    <text evidence="1">Belongs to the chloroplast-specific ribosomal protein cS23 family.</text>
</comment>
<protein>
    <recommendedName>
        <fullName evidence="1">Probable small ribosomal subunit protein cS23</fullName>
    </recommendedName>
    <alternativeName>
        <fullName>Probable 30S ribosomal protein PSRP-3</fullName>
    </alternativeName>
    <alternativeName>
        <fullName>Ycf65-like protein</fullName>
    </alternativeName>
</protein>